<organism>
    <name type="scientific">Atropa belladonna</name>
    <name type="common">Belladonna</name>
    <name type="synonym">Deadly nightshade</name>
    <dbReference type="NCBI Taxonomy" id="33113"/>
    <lineage>
        <taxon>Eukaryota</taxon>
        <taxon>Viridiplantae</taxon>
        <taxon>Streptophyta</taxon>
        <taxon>Embryophyta</taxon>
        <taxon>Tracheophyta</taxon>
        <taxon>Spermatophyta</taxon>
        <taxon>Magnoliopsida</taxon>
        <taxon>eudicotyledons</taxon>
        <taxon>Gunneridae</taxon>
        <taxon>Pentapetalae</taxon>
        <taxon>asterids</taxon>
        <taxon>lamiids</taxon>
        <taxon>Solanales</taxon>
        <taxon>Solanaceae</taxon>
        <taxon>Solanoideae</taxon>
        <taxon>Hyoscyameae</taxon>
        <taxon>Atropa</taxon>
    </lineage>
</organism>
<comment type="function">
    <text evidence="1">This b-type cytochrome is tightly associated with the reaction center of photosystem II (PSII). PSII is a light-driven water:plastoquinone oxidoreductase that uses light energy to abstract electrons from H(2)O, generating O(2) and a proton gradient subsequently used for ATP formation. It consists of a core antenna complex that captures photons, and an electron transfer chain that converts photonic excitation into a charge separation.</text>
</comment>
<comment type="cofactor">
    <cofactor evidence="1">
        <name>heme b</name>
        <dbReference type="ChEBI" id="CHEBI:60344"/>
    </cofactor>
    <text evidence="1">With its partner (PsbE) binds heme. PSII binds additional chlorophylls, carotenoids and specific lipids.</text>
</comment>
<comment type="subunit">
    <text evidence="1">Heterodimer of an alpha subunit and a beta subunit. PSII is composed of 1 copy each of membrane proteins PsbA, PsbB, PsbC, PsbD, PsbE, PsbF, PsbH, PsbI, PsbJ, PsbK, PsbL, PsbM, PsbT, PsbX, PsbY, PsbZ, Psb30/Ycf12, at least 3 peripheral proteins of the oxygen-evolving complex and a large number of cofactors. It forms dimeric complexes.</text>
</comment>
<comment type="subcellular location">
    <subcellularLocation>
        <location evidence="1">Plastid</location>
        <location evidence="1">Chloroplast thylakoid membrane</location>
        <topology evidence="1">Single-pass membrane protein</topology>
    </subcellularLocation>
</comment>
<comment type="similarity">
    <text evidence="1">Belongs to the PsbE/PsbF family.</text>
</comment>
<gene>
    <name evidence="1" type="primary">psbF</name>
</gene>
<dbReference type="EMBL" id="AJ316582">
    <property type="protein sequence ID" value="CAC88060.1"/>
    <property type="molecule type" value="Genomic_DNA"/>
</dbReference>
<dbReference type="RefSeq" id="NP_783248.1">
    <property type="nucleotide sequence ID" value="NC_004561.1"/>
</dbReference>
<dbReference type="SMR" id="P60250"/>
<dbReference type="GeneID" id="806535"/>
<dbReference type="GO" id="GO:0009535">
    <property type="term" value="C:chloroplast thylakoid membrane"/>
    <property type="evidence" value="ECO:0007669"/>
    <property type="project" value="UniProtKB-SubCell"/>
</dbReference>
<dbReference type="GO" id="GO:0009539">
    <property type="term" value="C:photosystem II reaction center"/>
    <property type="evidence" value="ECO:0007669"/>
    <property type="project" value="InterPro"/>
</dbReference>
<dbReference type="GO" id="GO:0009055">
    <property type="term" value="F:electron transfer activity"/>
    <property type="evidence" value="ECO:0007669"/>
    <property type="project" value="UniProtKB-UniRule"/>
</dbReference>
<dbReference type="GO" id="GO:0020037">
    <property type="term" value="F:heme binding"/>
    <property type="evidence" value="ECO:0007669"/>
    <property type="project" value="InterPro"/>
</dbReference>
<dbReference type="GO" id="GO:0005506">
    <property type="term" value="F:iron ion binding"/>
    <property type="evidence" value="ECO:0007669"/>
    <property type="project" value="UniProtKB-UniRule"/>
</dbReference>
<dbReference type="GO" id="GO:0009767">
    <property type="term" value="P:photosynthetic electron transport chain"/>
    <property type="evidence" value="ECO:0007669"/>
    <property type="project" value="InterPro"/>
</dbReference>
<dbReference type="HAMAP" id="MF_00643">
    <property type="entry name" value="PSII_PsbF"/>
    <property type="match status" value="1"/>
</dbReference>
<dbReference type="InterPro" id="IPR006241">
    <property type="entry name" value="PSII_cyt_b559_bsu"/>
</dbReference>
<dbReference type="InterPro" id="IPR006216">
    <property type="entry name" value="PSII_cyt_b559_CS"/>
</dbReference>
<dbReference type="InterPro" id="IPR013081">
    <property type="entry name" value="PSII_cyt_b559_N"/>
</dbReference>
<dbReference type="NCBIfam" id="TIGR01333">
    <property type="entry name" value="cyt_b559_beta"/>
    <property type="match status" value="1"/>
</dbReference>
<dbReference type="Pfam" id="PF00283">
    <property type="entry name" value="Cytochrom_B559"/>
    <property type="match status" value="1"/>
</dbReference>
<dbReference type="PIRSF" id="PIRSF000037">
    <property type="entry name" value="PsbF"/>
    <property type="match status" value="1"/>
</dbReference>
<dbReference type="SUPFAM" id="SSF161045">
    <property type="entry name" value="Cytochrome b559 subunits"/>
    <property type="match status" value="1"/>
</dbReference>
<dbReference type="PROSITE" id="PS00537">
    <property type="entry name" value="CYTOCHROME_B559"/>
    <property type="match status" value="1"/>
</dbReference>
<feature type="chain" id="PRO_0000200359" description="Cytochrome b559 subunit beta">
    <location>
        <begin position="1"/>
        <end position="39"/>
    </location>
</feature>
<feature type="transmembrane region" description="Helical" evidence="1">
    <location>
        <begin position="14"/>
        <end position="30"/>
    </location>
</feature>
<feature type="binding site" description="axial binding residue" evidence="1">
    <location>
        <position position="18"/>
    </location>
    <ligand>
        <name>heme</name>
        <dbReference type="ChEBI" id="CHEBI:30413"/>
        <note>ligand shared with alpha subunit</note>
    </ligand>
    <ligandPart>
        <name>Fe</name>
        <dbReference type="ChEBI" id="CHEBI:18248"/>
    </ligandPart>
</feature>
<geneLocation type="chloroplast"/>
<name>PSBF_ATRBE</name>
<reference key="1">
    <citation type="journal article" date="2002" name="Mol. Biol. Evol.">
        <title>The plastid chromosome of Atropa belladonna and its comparison with that of Nicotiana tabacum: the role of RNA editing in generating divergence in the process of plant speciation.</title>
        <authorList>
            <person name="Schmitz-Linneweber C."/>
            <person name="Regel R."/>
            <person name="Du T.G."/>
            <person name="Hupfer H."/>
            <person name="Herrmann R.G."/>
            <person name="Maier R.M."/>
        </authorList>
    </citation>
    <scope>NUCLEOTIDE SEQUENCE [LARGE SCALE GENOMIC DNA]</scope>
    <source>
        <strain>cv. Ab5p(kan)</strain>
    </source>
</reference>
<proteinExistence type="inferred from homology"/>
<evidence type="ECO:0000255" key="1">
    <source>
        <dbReference type="HAMAP-Rule" id="MF_00643"/>
    </source>
</evidence>
<keyword id="KW-0150">Chloroplast</keyword>
<keyword id="KW-0249">Electron transport</keyword>
<keyword id="KW-0349">Heme</keyword>
<keyword id="KW-0408">Iron</keyword>
<keyword id="KW-0472">Membrane</keyword>
<keyword id="KW-0479">Metal-binding</keyword>
<keyword id="KW-0602">Photosynthesis</keyword>
<keyword id="KW-0604">Photosystem II</keyword>
<keyword id="KW-0934">Plastid</keyword>
<keyword id="KW-0793">Thylakoid</keyword>
<keyword id="KW-0812">Transmembrane</keyword>
<keyword id="KW-1133">Transmembrane helix</keyword>
<keyword id="KW-0813">Transport</keyword>
<sequence length="39" mass="4484">MTIDRTYPIFTVRWLAVHGLAVPTVFFLGSISAMQFIQR</sequence>
<accession>P60250</accession>
<protein>
    <recommendedName>
        <fullName evidence="1">Cytochrome b559 subunit beta</fullName>
    </recommendedName>
    <alternativeName>
        <fullName evidence="1">PSII reaction center subunit VI</fullName>
    </alternativeName>
</protein>